<evidence type="ECO:0000250" key="1">
    <source>
        <dbReference type="UniProtKB" id="Q12893"/>
    </source>
</evidence>
<evidence type="ECO:0000255" key="2"/>
<evidence type="ECO:0000256" key="3">
    <source>
        <dbReference type="SAM" id="MobiDB-lite"/>
    </source>
</evidence>
<evidence type="ECO:0000305" key="4"/>
<gene>
    <name evidence="4" type="primary">TMEM115</name>
</gene>
<dbReference type="EMBL" id="BC114682">
    <property type="protein sequence ID" value="AAI14683.1"/>
    <property type="molecule type" value="mRNA"/>
</dbReference>
<dbReference type="EMBL" id="BC140647">
    <property type="protein sequence ID" value="AAI40648.1"/>
    <property type="molecule type" value="mRNA"/>
</dbReference>
<dbReference type="RefSeq" id="NP_001076930.1">
    <property type="nucleotide sequence ID" value="NM_001083461.3"/>
</dbReference>
<dbReference type="FunCoup" id="A4FUB8">
    <property type="interactions" value="3634"/>
</dbReference>
<dbReference type="PaxDb" id="9913-ENSBTAP00000003411"/>
<dbReference type="GeneID" id="532459"/>
<dbReference type="KEGG" id="bta:532459"/>
<dbReference type="CTD" id="11070"/>
<dbReference type="VEuPathDB" id="HostDB:ENSBTAG00000019161"/>
<dbReference type="eggNOG" id="KOG2890">
    <property type="taxonomic scope" value="Eukaryota"/>
</dbReference>
<dbReference type="HOGENOM" id="CLU_043563_2_0_1"/>
<dbReference type="InParanoid" id="A4FUB8"/>
<dbReference type="OMA" id="EIHFWEV"/>
<dbReference type="OrthoDB" id="73612at2759"/>
<dbReference type="TreeFam" id="TF315100"/>
<dbReference type="Reactome" id="R-BTA-6807878">
    <property type="pathway name" value="COPI-mediated anterograde transport"/>
</dbReference>
<dbReference type="Proteomes" id="UP000009136">
    <property type="component" value="Chromosome 22"/>
</dbReference>
<dbReference type="Bgee" id="ENSBTAG00000019161">
    <property type="expression patterns" value="Expressed in retina and 107 other cell types or tissues"/>
</dbReference>
<dbReference type="GO" id="GO:0005794">
    <property type="term" value="C:Golgi apparatus"/>
    <property type="evidence" value="ECO:0000318"/>
    <property type="project" value="GO_Central"/>
</dbReference>
<dbReference type="GO" id="GO:0032580">
    <property type="term" value="C:Golgi cisterna membrane"/>
    <property type="evidence" value="ECO:0000250"/>
    <property type="project" value="UniProtKB"/>
</dbReference>
<dbReference type="GO" id="GO:0042802">
    <property type="term" value="F:identical protein binding"/>
    <property type="evidence" value="ECO:0000250"/>
    <property type="project" value="UniProtKB"/>
</dbReference>
<dbReference type="GO" id="GO:0006890">
    <property type="term" value="P:retrograde vesicle-mediated transport, Golgi to endoplasmic reticulum"/>
    <property type="evidence" value="ECO:0000250"/>
    <property type="project" value="UniProtKB"/>
</dbReference>
<dbReference type="FunFam" id="1.20.1540.10:FF:000004">
    <property type="entry name" value="Transmembrane protein 115"/>
    <property type="match status" value="1"/>
</dbReference>
<dbReference type="InterPro" id="IPR035952">
    <property type="entry name" value="Rhomboid-like_sf"/>
</dbReference>
<dbReference type="InterPro" id="IPR013861">
    <property type="entry name" value="TMEM115/Pdh1/Rbl19"/>
</dbReference>
<dbReference type="PANTHER" id="PTHR13377">
    <property type="entry name" value="PLACENTAL PROTEIN 6"/>
    <property type="match status" value="1"/>
</dbReference>
<dbReference type="PANTHER" id="PTHR13377:SF3">
    <property type="entry name" value="TRANSMEMBRANE PROTEIN 115"/>
    <property type="match status" value="1"/>
</dbReference>
<dbReference type="Pfam" id="PF08551">
    <property type="entry name" value="DUF1751"/>
    <property type="match status" value="1"/>
</dbReference>
<dbReference type="SMART" id="SM01160">
    <property type="entry name" value="DUF1751"/>
    <property type="match status" value="1"/>
</dbReference>
<dbReference type="SUPFAM" id="SSF144091">
    <property type="entry name" value="Rhomboid-like"/>
    <property type="match status" value="1"/>
</dbReference>
<accession>A4FUB8</accession>
<name>TM115_BOVIN</name>
<comment type="function">
    <text evidence="1">May play a role in retrograde transport of proteins from the Golgi to the endoplasmic reticulum. May indirectly play a role in protein glycosylation in the Golgi.</text>
</comment>
<comment type="subunit">
    <text evidence="1">Homooligomer. Interacts with COPB1. May interact with LMAN1. Interacts with the COG complex; probably through COG3.</text>
</comment>
<comment type="subcellular location">
    <subcellularLocation>
        <location evidence="1">Golgi apparatus</location>
        <location evidence="1">Golgi stack membrane</location>
        <topology evidence="1">Multi-pass membrane protein</topology>
    </subcellularLocation>
</comment>
<comment type="similarity">
    <text evidence="4">Belongs to the TMEM115 family.</text>
</comment>
<organism>
    <name type="scientific">Bos taurus</name>
    <name type="common">Bovine</name>
    <dbReference type="NCBI Taxonomy" id="9913"/>
    <lineage>
        <taxon>Eukaryota</taxon>
        <taxon>Metazoa</taxon>
        <taxon>Chordata</taxon>
        <taxon>Craniata</taxon>
        <taxon>Vertebrata</taxon>
        <taxon>Euteleostomi</taxon>
        <taxon>Mammalia</taxon>
        <taxon>Eutheria</taxon>
        <taxon>Laurasiatheria</taxon>
        <taxon>Artiodactyla</taxon>
        <taxon>Ruminantia</taxon>
        <taxon>Pecora</taxon>
        <taxon>Bovidae</taxon>
        <taxon>Bovinae</taxon>
        <taxon>Bos</taxon>
    </lineage>
</organism>
<keyword id="KW-0333">Golgi apparatus</keyword>
<keyword id="KW-0472">Membrane</keyword>
<keyword id="KW-0597">Phosphoprotein</keyword>
<keyword id="KW-1185">Reference proteome</keyword>
<keyword id="KW-0812">Transmembrane</keyword>
<keyword id="KW-1133">Transmembrane helix</keyword>
<protein>
    <recommendedName>
        <fullName evidence="4">Transmembrane protein 115</fullName>
    </recommendedName>
</protein>
<feature type="chain" id="PRO_0000355564" description="Transmembrane protein 115">
    <location>
        <begin position="1"/>
        <end position="351"/>
    </location>
</feature>
<feature type="topological domain" description="Cytoplasmic" evidence="4">
    <location>
        <begin position="1"/>
        <end position="19"/>
    </location>
</feature>
<feature type="transmembrane region" description="Helical; Name=1" evidence="2">
    <location>
        <begin position="20"/>
        <end position="40"/>
    </location>
</feature>
<feature type="topological domain" description="Lumenal" evidence="4">
    <location>
        <begin position="41"/>
        <end position="97"/>
    </location>
</feature>
<feature type="transmembrane region" description="Helical; Name=2" evidence="2">
    <location>
        <begin position="98"/>
        <end position="118"/>
    </location>
</feature>
<feature type="topological domain" description="Cytoplasmic" evidence="4">
    <location>
        <begin position="119"/>
        <end position="126"/>
    </location>
</feature>
<feature type="transmembrane region" description="Helical; Name=3" evidence="2">
    <location>
        <begin position="127"/>
        <end position="147"/>
    </location>
</feature>
<feature type="topological domain" description="Lumenal" evidence="4">
    <location>
        <begin position="148"/>
        <end position="165"/>
    </location>
</feature>
<feature type="transmembrane region" description="Helical; Name=4" evidence="2">
    <location>
        <begin position="166"/>
        <end position="186"/>
    </location>
</feature>
<feature type="topological domain" description="Cytoplasmic" evidence="4">
    <location>
        <begin position="187"/>
        <end position="351"/>
    </location>
</feature>
<feature type="region of interest" description="Mediates homooligomerization" evidence="1">
    <location>
        <begin position="1"/>
        <end position="205"/>
    </location>
</feature>
<feature type="region of interest" description="Mediates localization to the Golgi" evidence="1">
    <location>
        <begin position="206"/>
        <end position="229"/>
    </location>
</feature>
<feature type="region of interest" description="Disordered" evidence="3">
    <location>
        <begin position="300"/>
        <end position="351"/>
    </location>
</feature>
<feature type="modified residue" description="Phosphothreonine" evidence="1">
    <location>
        <position position="329"/>
    </location>
</feature>
<sequence>MQRALPGARQHLGAILSSASVVVKALCAAVLFLYLLSFAVDTGCLAVTPGYLFPPNFWIWTLATHGLMEQHVWDVAISLATVVVAGRLLEPLWGALELLIFFSVVNVSVGLLGAFAYLLTYMASFNLVYLFTVRIHGALGFLGGVLVALKQTMGDCVVLRVPQVRVSVVPMLLLGLLLLLRLATLLQSPALASYGFGLISSWVYLRFYQRHSRGRGDMADHFAFATFFPEILQPVVGLLANLVHGLLVKVKICQKTVKRYDVGAPSSITISLPGTDPQDAERRRQLALKALNERLKRVEDQSVWPSMDDDEEEAGAKVDSPMPSDKAPTLPGKGAVPESSLITFEAAPPTL</sequence>
<proteinExistence type="evidence at transcript level"/>
<reference key="1">
    <citation type="submission" date="2007-04" db="EMBL/GenBank/DDBJ databases">
        <authorList>
            <consortium name="NIH - Mammalian Gene Collection (MGC) project"/>
        </authorList>
    </citation>
    <scope>NUCLEOTIDE SEQUENCE [LARGE SCALE MRNA]</scope>
    <source>
        <strain>Hereford</strain>
        <tissue>Fetal pons</tissue>
        <tissue>Uterus</tissue>
    </source>
</reference>